<dbReference type="EMBL" id="CP000771">
    <property type="protein sequence ID" value="ABS61617.1"/>
    <property type="molecule type" value="Genomic_DNA"/>
</dbReference>
<dbReference type="RefSeq" id="WP_011994908.1">
    <property type="nucleotide sequence ID" value="NC_009718.1"/>
</dbReference>
<dbReference type="SMR" id="A7HNY4"/>
<dbReference type="STRING" id="381764.Fnod_1784"/>
<dbReference type="KEGG" id="fno:Fnod_1784"/>
<dbReference type="eggNOG" id="COG0244">
    <property type="taxonomic scope" value="Bacteria"/>
</dbReference>
<dbReference type="HOGENOM" id="CLU_092227_1_2_0"/>
<dbReference type="OrthoDB" id="9808307at2"/>
<dbReference type="Proteomes" id="UP000002415">
    <property type="component" value="Chromosome"/>
</dbReference>
<dbReference type="GO" id="GO:0015934">
    <property type="term" value="C:large ribosomal subunit"/>
    <property type="evidence" value="ECO:0007669"/>
    <property type="project" value="InterPro"/>
</dbReference>
<dbReference type="GO" id="GO:0070180">
    <property type="term" value="F:large ribosomal subunit rRNA binding"/>
    <property type="evidence" value="ECO:0007669"/>
    <property type="project" value="UniProtKB-UniRule"/>
</dbReference>
<dbReference type="GO" id="GO:0003735">
    <property type="term" value="F:structural constituent of ribosome"/>
    <property type="evidence" value="ECO:0007669"/>
    <property type="project" value="InterPro"/>
</dbReference>
<dbReference type="GO" id="GO:0006412">
    <property type="term" value="P:translation"/>
    <property type="evidence" value="ECO:0007669"/>
    <property type="project" value="UniProtKB-UniRule"/>
</dbReference>
<dbReference type="CDD" id="cd05797">
    <property type="entry name" value="Ribosomal_L10"/>
    <property type="match status" value="1"/>
</dbReference>
<dbReference type="Gene3D" id="3.30.70.1730">
    <property type="match status" value="1"/>
</dbReference>
<dbReference type="Gene3D" id="6.10.250.290">
    <property type="match status" value="1"/>
</dbReference>
<dbReference type="HAMAP" id="MF_00362">
    <property type="entry name" value="Ribosomal_uL10"/>
    <property type="match status" value="1"/>
</dbReference>
<dbReference type="InterPro" id="IPR001790">
    <property type="entry name" value="Ribosomal_uL10"/>
</dbReference>
<dbReference type="InterPro" id="IPR043141">
    <property type="entry name" value="Ribosomal_uL10-like_sf"/>
</dbReference>
<dbReference type="InterPro" id="IPR022973">
    <property type="entry name" value="Ribosomal_uL10_bac"/>
</dbReference>
<dbReference type="InterPro" id="IPR047865">
    <property type="entry name" value="Ribosomal_uL10_bac_type"/>
</dbReference>
<dbReference type="InterPro" id="IPR002363">
    <property type="entry name" value="Ribosomal_uL10_CS_bac"/>
</dbReference>
<dbReference type="NCBIfam" id="NF000955">
    <property type="entry name" value="PRK00099.1-1"/>
    <property type="match status" value="1"/>
</dbReference>
<dbReference type="PANTHER" id="PTHR11560">
    <property type="entry name" value="39S RIBOSOMAL PROTEIN L10, MITOCHONDRIAL"/>
    <property type="match status" value="1"/>
</dbReference>
<dbReference type="Pfam" id="PF00466">
    <property type="entry name" value="Ribosomal_L10"/>
    <property type="match status" value="1"/>
</dbReference>
<dbReference type="SUPFAM" id="SSF160369">
    <property type="entry name" value="Ribosomal protein L10-like"/>
    <property type="match status" value="1"/>
</dbReference>
<dbReference type="PROSITE" id="PS01109">
    <property type="entry name" value="RIBOSOMAL_L10"/>
    <property type="match status" value="1"/>
</dbReference>
<comment type="function">
    <text evidence="1">Forms part of the ribosomal stalk, playing a central role in the interaction of the ribosome with GTP-bound translation factors.</text>
</comment>
<comment type="subunit">
    <text evidence="1">Part of the ribosomal stalk of the 50S ribosomal subunit. The N-terminus interacts with L11 and the large rRNA to form the base of the stalk. The C-terminus forms an elongated spine to which L12 dimers bind in a sequential fashion forming a multimeric L10(L12)X complex.</text>
</comment>
<comment type="similarity">
    <text evidence="1">Belongs to the universal ribosomal protein uL10 family.</text>
</comment>
<proteinExistence type="inferred from homology"/>
<sequence>MLRRPEKEQLVQELTSEFQNSSLVLFTDFKGLTVAQMTNLRRALREKLGSGARLTVVKNTLLKMALKNSGYDVDSHESSFFGPTAVLYVTEGDPVEAIKVFYNFVKENKGTPVCKGLFLERKFFAGEQLEDLSKLPSRDQLIAMVVGGIQAPIRGLVNSLAGVLRSVLYALNAIKEQKEKQ</sequence>
<name>RL10_FERNB</name>
<organism>
    <name type="scientific">Fervidobacterium nodosum (strain ATCC 35602 / DSM 5306 / Rt17-B1)</name>
    <dbReference type="NCBI Taxonomy" id="381764"/>
    <lineage>
        <taxon>Bacteria</taxon>
        <taxon>Thermotogati</taxon>
        <taxon>Thermotogota</taxon>
        <taxon>Thermotogae</taxon>
        <taxon>Thermotogales</taxon>
        <taxon>Fervidobacteriaceae</taxon>
        <taxon>Fervidobacterium</taxon>
    </lineage>
</organism>
<evidence type="ECO:0000255" key="1">
    <source>
        <dbReference type="HAMAP-Rule" id="MF_00362"/>
    </source>
</evidence>
<evidence type="ECO:0000305" key="2"/>
<reference key="1">
    <citation type="submission" date="2007-07" db="EMBL/GenBank/DDBJ databases">
        <title>Complete sequence of Fervidobacterium nodosum Rt17-B1.</title>
        <authorList>
            <consortium name="US DOE Joint Genome Institute"/>
            <person name="Copeland A."/>
            <person name="Lucas S."/>
            <person name="Lapidus A."/>
            <person name="Barry K."/>
            <person name="Glavina del Rio T."/>
            <person name="Dalin E."/>
            <person name="Tice H."/>
            <person name="Pitluck S."/>
            <person name="Saunders E."/>
            <person name="Brettin T."/>
            <person name="Bruce D."/>
            <person name="Detter J.C."/>
            <person name="Han C."/>
            <person name="Schmutz J."/>
            <person name="Larimer F."/>
            <person name="Land M."/>
            <person name="Hauser L."/>
            <person name="Kyrpides N."/>
            <person name="Mikhailova N."/>
            <person name="Nelson K."/>
            <person name="Gogarten J.P."/>
            <person name="Noll K."/>
            <person name="Richardson P."/>
        </authorList>
    </citation>
    <scope>NUCLEOTIDE SEQUENCE [LARGE SCALE GENOMIC DNA]</scope>
    <source>
        <strain>ATCC 35602 / DSM 5306 / Rt17-B1</strain>
    </source>
</reference>
<gene>
    <name evidence="1" type="primary">rplJ</name>
    <name type="ordered locus">Fnod_1784</name>
</gene>
<keyword id="KW-1185">Reference proteome</keyword>
<keyword id="KW-0687">Ribonucleoprotein</keyword>
<keyword id="KW-0689">Ribosomal protein</keyword>
<keyword id="KW-0694">RNA-binding</keyword>
<keyword id="KW-0699">rRNA-binding</keyword>
<accession>A7HNY4</accession>
<protein>
    <recommendedName>
        <fullName evidence="1">Large ribosomal subunit protein uL10</fullName>
    </recommendedName>
    <alternativeName>
        <fullName evidence="2">50S ribosomal protein L10</fullName>
    </alternativeName>
</protein>
<feature type="chain" id="PRO_1000072089" description="Large ribosomal subunit protein uL10">
    <location>
        <begin position="1"/>
        <end position="181"/>
    </location>
</feature>